<name>GREA_CLOB6</name>
<gene>
    <name evidence="1" type="primary">greA</name>
    <name type="ordered locus">CLJ_B3843</name>
</gene>
<evidence type="ECO:0000255" key="1">
    <source>
        <dbReference type="HAMAP-Rule" id="MF_00105"/>
    </source>
</evidence>
<sequence>MSEAKKYVMTYEGVKKLEEELEYLKTVKRKEITEKIKVALSFGDLSENSEYDEAKNEQAFVEGRIIQLENMLKNASIVDENEVPKDIVSVGSIVKVKDYEFDEEVEYIIVGSAEADPMNNKISNESPVGHGLIGKKVGDIIEVTVPDGVSKYEILEVNRA</sequence>
<reference key="1">
    <citation type="submission" date="2008-05" db="EMBL/GenBank/DDBJ databases">
        <title>Genome sequence of Clostridium botulinum Ba4 strain 657.</title>
        <authorList>
            <person name="Shrivastava S."/>
            <person name="Brown J.L."/>
            <person name="Bruce D."/>
            <person name="Detter C."/>
            <person name="Munk C."/>
            <person name="Smith L.A."/>
            <person name="Smith T.J."/>
            <person name="Sutton G."/>
            <person name="Brettin T.S."/>
        </authorList>
    </citation>
    <scope>NUCLEOTIDE SEQUENCE [LARGE SCALE GENOMIC DNA]</scope>
    <source>
        <strain>657 / Type Ba4</strain>
    </source>
</reference>
<proteinExistence type="inferred from homology"/>
<protein>
    <recommendedName>
        <fullName evidence="1">Transcription elongation factor GreA</fullName>
    </recommendedName>
    <alternativeName>
        <fullName evidence="1">Transcript cleavage factor GreA</fullName>
    </alternativeName>
</protein>
<organism>
    <name type="scientific">Clostridium botulinum (strain 657 / Type Ba4)</name>
    <dbReference type="NCBI Taxonomy" id="515621"/>
    <lineage>
        <taxon>Bacteria</taxon>
        <taxon>Bacillati</taxon>
        <taxon>Bacillota</taxon>
        <taxon>Clostridia</taxon>
        <taxon>Eubacteriales</taxon>
        <taxon>Clostridiaceae</taxon>
        <taxon>Clostridium</taxon>
    </lineage>
</organism>
<dbReference type="EMBL" id="CP001083">
    <property type="protein sequence ID" value="ACQ54683.1"/>
    <property type="molecule type" value="Genomic_DNA"/>
</dbReference>
<dbReference type="RefSeq" id="WP_003361709.1">
    <property type="nucleotide sequence ID" value="NC_012658.1"/>
</dbReference>
<dbReference type="SMR" id="C3KVU0"/>
<dbReference type="KEGG" id="cbi:CLJ_B3843"/>
<dbReference type="HOGENOM" id="CLU_101379_2_1_9"/>
<dbReference type="Proteomes" id="UP000002333">
    <property type="component" value="Chromosome"/>
</dbReference>
<dbReference type="GO" id="GO:0003677">
    <property type="term" value="F:DNA binding"/>
    <property type="evidence" value="ECO:0007669"/>
    <property type="project" value="UniProtKB-UniRule"/>
</dbReference>
<dbReference type="GO" id="GO:0070063">
    <property type="term" value="F:RNA polymerase binding"/>
    <property type="evidence" value="ECO:0007669"/>
    <property type="project" value="InterPro"/>
</dbReference>
<dbReference type="GO" id="GO:0006354">
    <property type="term" value="P:DNA-templated transcription elongation"/>
    <property type="evidence" value="ECO:0007669"/>
    <property type="project" value="TreeGrafter"/>
</dbReference>
<dbReference type="GO" id="GO:0032784">
    <property type="term" value="P:regulation of DNA-templated transcription elongation"/>
    <property type="evidence" value="ECO:0007669"/>
    <property type="project" value="UniProtKB-UniRule"/>
</dbReference>
<dbReference type="FunFam" id="1.10.287.180:FF:000001">
    <property type="entry name" value="Transcription elongation factor GreA"/>
    <property type="match status" value="1"/>
</dbReference>
<dbReference type="FunFam" id="3.10.50.30:FF:000001">
    <property type="entry name" value="Transcription elongation factor GreA"/>
    <property type="match status" value="1"/>
</dbReference>
<dbReference type="Gene3D" id="3.10.50.30">
    <property type="entry name" value="Transcription elongation factor, GreA/GreB, C-terminal domain"/>
    <property type="match status" value="1"/>
</dbReference>
<dbReference type="Gene3D" id="1.10.287.180">
    <property type="entry name" value="Transcription elongation factor, GreA/GreB, N-terminal domain"/>
    <property type="match status" value="1"/>
</dbReference>
<dbReference type="HAMAP" id="MF_00105">
    <property type="entry name" value="GreA_GreB"/>
    <property type="match status" value="1"/>
</dbReference>
<dbReference type="InterPro" id="IPR036953">
    <property type="entry name" value="GreA/GreB_C_sf"/>
</dbReference>
<dbReference type="InterPro" id="IPR018151">
    <property type="entry name" value="TF_GreA/GreB_CS"/>
</dbReference>
<dbReference type="InterPro" id="IPR006359">
    <property type="entry name" value="Tscrpt_elong_fac_GreA"/>
</dbReference>
<dbReference type="InterPro" id="IPR028624">
    <property type="entry name" value="Tscrpt_elong_fac_GreA/B"/>
</dbReference>
<dbReference type="InterPro" id="IPR001437">
    <property type="entry name" value="Tscrpt_elong_fac_GreA/B_C"/>
</dbReference>
<dbReference type="InterPro" id="IPR023459">
    <property type="entry name" value="Tscrpt_elong_fac_GreA/B_fam"/>
</dbReference>
<dbReference type="InterPro" id="IPR022691">
    <property type="entry name" value="Tscrpt_elong_fac_GreA/B_N"/>
</dbReference>
<dbReference type="InterPro" id="IPR036805">
    <property type="entry name" value="Tscrpt_elong_fac_GreA/B_N_sf"/>
</dbReference>
<dbReference type="NCBIfam" id="TIGR01462">
    <property type="entry name" value="greA"/>
    <property type="match status" value="1"/>
</dbReference>
<dbReference type="NCBIfam" id="NF001261">
    <property type="entry name" value="PRK00226.1-2"/>
    <property type="match status" value="1"/>
</dbReference>
<dbReference type="NCBIfam" id="NF001263">
    <property type="entry name" value="PRK00226.1-4"/>
    <property type="match status" value="1"/>
</dbReference>
<dbReference type="PANTHER" id="PTHR30437">
    <property type="entry name" value="TRANSCRIPTION ELONGATION FACTOR GREA"/>
    <property type="match status" value="1"/>
</dbReference>
<dbReference type="PANTHER" id="PTHR30437:SF4">
    <property type="entry name" value="TRANSCRIPTION ELONGATION FACTOR GREA"/>
    <property type="match status" value="1"/>
</dbReference>
<dbReference type="Pfam" id="PF01272">
    <property type="entry name" value="GreA_GreB"/>
    <property type="match status" value="1"/>
</dbReference>
<dbReference type="Pfam" id="PF03449">
    <property type="entry name" value="GreA_GreB_N"/>
    <property type="match status" value="1"/>
</dbReference>
<dbReference type="PIRSF" id="PIRSF006092">
    <property type="entry name" value="GreA_GreB"/>
    <property type="match status" value="1"/>
</dbReference>
<dbReference type="SUPFAM" id="SSF54534">
    <property type="entry name" value="FKBP-like"/>
    <property type="match status" value="1"/>
</dbReference>
<dbReference type="SUPFAM" id="SSF46557">
    <property type="entry name" value="GreA transcript cleavage protein, N-terminal domain"/>
    <property type="match status" value="1"/>
</dbReference>
<dbReference type="PROSITE" id="PS00829">
    <property type="entry name" value="GREAB_1"/>
    <property type="match status" value="1"/>
</dbReference>
<dbReference type="PROSITE" id="PS00830">
    <property type="entry name" value="GREAB_2"/>
    <property type="match status" value="1"/>
</dbReference>
<keyword id="KW-0175">Coiled coil</keyword>
<keyword id="KW-0238">DNA-binding</keyword>
<keyword id="KW-0804">Transcription</keyword>
<keyword id="KW-0805">Transcription regulation</keyword>
<comment type="function">
    <text evidence="1">Necessary for efficient RNA polymerase transcription elongation past template-encoded arresting sites. The arresting sites in DNA have the property of trapping a certain fraction of elongating RNA polymerases that pass through, resulting in locked ternary complexes. Cleavage of the nascent transcript by cleavage factors such as GreA or GreB allows the resumption of elongation from the new 3'terminus. GreA releases sequences of 2 to 3 nucleotides.</text>
</comment>
<comment type="similarity">
    <text evidence="1">Belongs to the GreA/GreB family.</text>
</comment>
<accession>C3KVU0</accession>
<feature type="chain" id="PRO_1000202848" description="Transcription elongation factor GreA">
    <location>
        <begin position="1"/>
        <end position="160"/>
    </location>
</feature>
<feature type="coiled-coil region" evidence="1">
    <location>
        <begin position="14"/>
        <end position="76"/>
    </location>
</feature>